<feature type="chain" id="PRO_0000265032" description="Putative 3-methyladenine DNA glycosylase">
    <location>
        <begin position="1"/>
        <end position="183"/>
    </location>
</feature>
<protein>
    <recommendedName>
        <fullName evidence="1">Putative 3-methyladenine DNA glycosylase</fullName>
        <ecNumber evidence="1">3.2.2.-</ecNumber>
    </recommendedName>
</protein>
<comment type="similarity">
    <text evidence="1">Belongs to the DNA glycosylase MPG family.</text>
</comment>
<sequence>MRKLLRPFYERDTVLVAKELLGKYLVHHDGLEEKIGRIVEVEAYLGQHDLACHSSKGLTKRTKVMFGPAGYAYVYLIYGMYYCMNVVTEKEGIGSAVLIRALEPIKNIQDRTQGPGLLSKAMRIDSKLNHRDLLSNDFYIAEPNSPTDFTIIEKPRIGVHYAKEWANELLRFYIKDNPYISKT</sequence>
<evidence type="ECO:0000255" key="1">
    <source>
        <dbReference type="HAMAP-Rule" id="MF_00527"/>
    </source>
</evidence>
<accession>Q5ZX66</accession>
<dbReference type="EC" id="3.2.2.-" evidence="1"/>
<dbReference type="EMBL" id="AE017354">
    <property type="protein sequence ID" value="AAU26954.1"/>
    <property type="molecule type" value="Genomic_DNA"/>
</dbReference>
<dbReference type="RefSeq" id="WP_010946602.1">
    <property type="nucleotide sequence ID" value="NC_002942.5"/>
</dbReference>
<dbReference type="RefSeq" id="YP_094901.1">
    <property type="nucleotide sequence ID" value="NC_002942.5"/>
</dbReference>
<dbReference type="SMR" id="Q5ZX66"/>
<dbReference type="STRING" id="272624.lpg0866"/>
<dbReference type="PaxDb" id="272624-lpg0866"/>
<dbReference type="KEGG" id="lpn:lpg0866"/>
<dbReference type="PATRIC" id="fig|272624.6.peg.898"/>
<dbReference type="eggNOG" id="COG2094">
    <property type="taxonomic scope" value="Bacteria"/>
</dbReference>
<dbReference type="HOGENOM" id="CLU_060471_4_1_6"/>
<dbReference type="OrthoDB" id="9794313at2"/>
<dbReference type="Proteomes" id="UP000000609">
    <property type="component" value="Chromosome"/>
</dbReference>
<dbReference type="GO" id="GO:0003905">
    <property type="term" value="F:alkylbase DNA N-glycosylase activity"/>
    <property type="evidence" value="ECO:0007669"/>
    <property type="project" value="InterPro"/>
</dbReference>
<dbReference type="GO" id="GO:0003677">
    <property type="term" value="F:DNA binding"/>
    <property type="evidence" value="ECO:0007669"/>
    <property type="project" value="InterPro"/>
</dbReference>
<dbReference type="GO" id="GO:0006284">
    <property type="term" value="P:base-excision repair"/>
    <property type="evidence" value="ECO:0007669"/>
    <property type="project" value="InterPro"/>
</dbReference>
<dbReference type="CDD" id="cd00540">
    <property type="entry name" value="AAG"/>
    <property type="match status" value="1"/>
</dbReference>
<dbReference type="FunFam" id="3.10.300.10:FF:000001">
    <property type="entry name" value="Putative 3-methyladenine DNA glycosylase"/>
    <property type="match status" value="1"/>
</dbReference>
<dbReference type="Gene3D" id="3.10.300.10">
    <property type="entry name" value="Methylpurine-DNA glycosylase (MPG)"/>
    <property type="match status" value="1"/>
</dbReference>
<dbReference type="HAMAP" id="MF_00527">
    <property type="entry name" value="3MGH"/>
    <property type="match status" value="1"/>
</dbReference>
<dbReference type="InterPro" id="IPR011034">
    <property type="entry name" value="Formyl_transferase-like_C_sf"/>
</dbReference>
<dbReference type="InterPro" id="IPR003180">
    <property type="entry name" value="MPG"/>
</dbReference>
<dbReference type="InterPro" id="IPR036995">
    <property type="entry name" value="MPG_sf"/>
</dbReference>
<dbReference type="NCBIfam" id="TIGR00567">
    <property type="entry name" value="3mg"/>
    <property type="match status" value="1"/>
</dbReference>
<dbReference type="PANTHER" id="PTHR10429">
    <property type="entry name" value="DNA-3-METHYLADENINE GLYCOSYLASE"/>
    <property type="match status" value="1"/>
</dbReference>
<dbReference type="PANTHER" id="PTHR10429:SF0">
    <property type="entry name" value="DNA-3-METHYLADENINE GLYCOSYLASE"/>
    <property type="match status" value="1"/>
</dbReference>
<dbReference type="Pfam" id="PF02245">
    <property type="entry name" value="Pur_DNA_glyco"/>
    <property type="match status" value="1"/>
</dbReference>
<dbReference type="SUPFAM" id="SSF50486">
    <property type="entry name" value="FMT C-terminal domain-like"/>
    <property type="match status" value="1"/>
</dbReference>
<reference key="1">
    <citation type="journal article" date="2004" name="Science">
        <title>The genomic sequence of the accidental pathogen Legionella pneumophila.</title>
        <authorList>
            <person name="Chien M."/>
            <person name="Morozova I."/>
            <person name="Shi S."/>
            <person name="Sheng H."/>
            <person name="Chen J."/>
            <person name="Gomez S.M."/>
            <person name="Asamani G."/>
            <person name="Hill K."/>
            <person name="Nuara J."/>
            <person name="Feder M."/>
            <person name="Rineer J."/>
            <person name="Greenberg J.J."/>
            <person name="Steshenko V."/>
            <person name="Park S.H."/>
            <person name="Zhao B."/>
            <person name="Teplitskaya E."/>
            <person name="Edwards J.R."/>
            <person name="Pampou S."/>
            <person name="Georghiou A."/>
            <person name="Chou I.-C."/>
            <person name="Iannuccilli W."/>
            <person name="Ulz M.E."/>
            <person name="Kim D.H."/>
            <person name="Geringer-Sameth A."/>
            <person name="Goldsberry C."/>
            <person name="Morozov P."/>
            <person name="Fischer S.G."/>
            <person name="Segal G."/>
            <person name="Qu X."/>
            <person name="Rzhetsky A."/>
            <person name="Zhang P."/>
            <person name="Cayanis E."/>
            <person name="De Jong P.J."/>
            <person name="Ju J."/>
            <person name="Kalachikov S."/>
            <person name="Shuman H.A."/>
            <person name="Russo J.J."/>
        </authorList>
    </citation>
    <scope>NUCLEOTIDE SEQUENCE [LARGE SCALE GENOMIC DNA]</scope>
    <source>
        <strain>Philadelphia 1 / ATCC 33152 / DSM 7513</strain>
    </source>
</reference>
<keyword id="KW-0227">DNA damage</keyword>
<keyword id="KW-0234">DNA repair</keyword>
<keyword id="KW-0378">Hydrolase</keyword>
<keyword id="KW-1185">Reference proteome</keyword>
<proteinExistence type="inferred from homology"/>
<name>3MGH_LEGPH</name>
<organism>
    <name type="scientific">Legionella pneumophila subsp. pneumophila (strain Philadelphia 1 / ATCC 33152 / DSM 7513)</name>
    <dbReference type="NCBI Taxonomy" id="272624"/>
    <lineage>
        <taxon>Bacteria</taxon>
        <taxon>Pseudomonadati</taxon>
        <taxon>Pseudomonadota</taxon>
        <taxon>Gammaproteobacteria</taxon>
        <taxon>Legionellales</taxon>
        <taxon>Legionellaceae</taxon>
        <taxon>Legionella</taxon>
    </lineage>
</organism>
<gene>
    <name type="ordered locus">lpg0866</name>
</gene>